<gene>
    <name evidence="1" type="primary">pyrB</name>
    <name type="ordered locus">AF_0106</name>
</gene>
<sequence>MMRHLISIGDLDREDINYILKKAEEFEDVARGEKKLRILEGKILGNLFFEPSTRTRMSFETAMKRLGGDVINMTAQEASSIAKGETLADTIRVVSGYCDAIVIRHPLEGAARFAAENSSVPVINAGDGAGQHPTQTLLDLYTIKKECGRLDGITIALMGDLKYSRTIHSLIKALALFDMRIYLISPEALALPEDIIEDVSAEIRRARLEEVISEIDVLYVTRIQKERFPDEEEYRKVSGSYRITAETLKSAKDSMIVMHPLPRVDEIHPSVDSTKHARYFQQSFYGVPVRMAILSEVML</sequence>
<keyword id="KW-0665">Pyrimidine biosynthesis</keyword>
<keyword id="KW-1185">Reference proteome</keyword>
<keyword id="KW-0808">Transferase</keyword>
<protein>
    <recommendedName>
        <fullName evidence="1">Aspartate carbamoyltransferase catalytic subunit</fullName>
        <ecNumber evidence="1">2.1.3.2</ecNumber>
    </recommendedName>
    <alternativeName>
        <fullName evidence="1">Aspartate transcarbamylase</fullName>
        <shortName evidence="1">ATCase</shortName>
    </alternativeName>
</protein>
<name>PYRB_ARCFU</name>
<evidence type="ECO:0000255" key="1">
    <source>
        <dbReference type="HAMAP-Rule" id="MF_00001"/>
    </source>
</evidence>
<evidence type="ECO:0000305" key="2"/>
<feature type="chain" id="PRO_0000113243" description="Aspartate carbamoyltransferase catalytic subunit">
    <location>
        <begin position="1"/>
        <end position="299"/>
    </location>
</feature>
<feature type="binding site" evidence="1">
    <location>
        <position position="54"/>
    </location>
    <ligand>
        <name>carbamoyl phosphate</name>
        <dbReference type="ChEBI" id="CHEBI:58228"/>
    </ligand>
</feature>
<feature type="binding site" evidence="1">
    <location>
        <position position="55"/>
    </location>
    <ligand>
        <name>carbamoyl phosphate</name>
        <dbReference type="ChEBI" id="CHEBI:58228"/>
    </ligand>
</feature>
<feature type="binding site" evidence="1">
    <location>
        <position position="83"/>
    </location>
    <ligand>
        <name>L-aspartate</name>
        <dbReference type="ChEBI" id="CHEBI:29991"/>
    </ligand>
</feature>
<feature type="binding site" evidence="1">
    <location>
        <position position="104"/>
    </location>
    <ligand>
        <name>carbamoyl phosphate</name>
        <dbReference type="ChEBI" id="CHEBI:58228"/>
    </ligand>
</feature>
<feature type="binding site" evidence="1">
    <location>
        <position position="132"/>
    </location>
    <ligand>
        <name>carbamoyl phosphate</name>
        <dbReference type="ChEBI" id="CHEBI:58228"/>
    </ligand>
</feature>
<feature type="binding site" evidence="1">
    <location>
        <position position="135"/>
    </location>
    <ligand>
        <name>carbamoyl phosphate</name>
        <dbReference type="ChEBI" id="CHEBI:58228"/>
    </ligand>
</feature>
<feature type="binding site" evidence="1">
    <location>
        <position position="165"/>
    </location>
    <ligand>
        <name>L-aspartate</name>
        <dbReference type="ChEBI" id="CHEBI:29991"/>
    </ligand>
</feature>
<feature type="binding site" evidence="1">
    <location>
        <position position="222"/>
    </location>
    <ligand>
        <name>L-aspartate</name>
        <dbReference type="ChEBI" id="CHEBI:29991"/>
    </ligand>
</feature>
<feature type="binding site" evidence="1">
    <location>
        <position position="261"/>
    </location>
    <ligand>
        <name>carbamoyl phosphate</name>
        <dbReference type="ChEBI" id="CHEBI:58228"/>
    </ligand>
</feature>
<feature type="binding site" evidence="1">
    <location>
        <position position="262"/>
    </location>
    <ligand>
        <name>carbamoyl phosphate</name>
        <dbReference type="ChEBI" id="CHEBI:58228"/>
    </ligand>
</feature>
<dbReference type="EC" id="2.1.3.2" evidence="1"/>
<dbReference type="EMBL" id="AE000782">
    <property type="protein sequence ID" value="AAB91125.1"/>
    <property type="molecule type" value="Genomic_DNA"/>
</dbReference>
<dbReference type="PIR" id="B69263">
    <property type="entry name" value="B69263"/>
</dbReference>
<dbReference type="SMR" id="O30130"/>
<dbReference type="STRING" id="224325.AF_0106"/>
<dbReference type="PaxDb" id="224325-AF_0106"/>
<dbReference type="EnsemblBacteria" id="AAB91125">
    <property type="protein sequence ID" value="AAB91125"/>
    <property type="gene ID" value="AF_0106"/>
</dbReference>
<dbReference type="KEGG" id="afu:AF_0106"/>
<dbReference type="eggNOG" id="arCOG00911">
    <property type="taxonomic scope" value="Archaea"/>
</dbReference>
<dbReference type="HOGENOM" id="CLU_043846_1_2_2"/>
<dbReference type="PhylomeDB" id="O30130"/>
<dbReference type="UniPathway" id="UPA00070">
    <property type="reaction ID" value="UER00116"/>
</dbReference>
<dbReference type="Proteomes" id="UP000002199">
    <property type="component" value="Chromosome"/>
</dbReference>
<dbReference type="GO" id="GO:0016597">
    <property type="term" value="F:amino acid binding"/>
    <property type="evidence" value="ECO:0007669"/>
    <property type="project" value="InterPro"/>
</dbReference>
<dbReference type="GO" id="GO:0004070">
    <property type="term" value="F:aspartate carbamoyltransferase activity"/>
    <property type="evidence" value="ECO:0007669"/>
    <property type="project" value="UniProtKB-UniRule"/>
</dbReference>
<dbReference type="GO" id="GO:0006207">
    <property type="term" value="P:'de novo' pyrimidine nucleobase biosynthetic process"/>
    <property type="evidence" value="ECO:0007669"/>
    <property type="project" value="InterPro"/>
</dbReference>
<dbReference type="GO" id="GO:0044205">
    <property type="term" value="P:'de novo' UMP biosynthetic process"/>
    <property type="evidence" value="ECO:0007669"/>
    <property type="project" value="UniProtKB-UniRule"/>
</dbReference>
<dbReference type="GO" id="GO:0006520">
    <property type="term" value="P:amino acid metabolic process"/>
    <property type="evidence" value="ECO:0007669"/>
    <property type="project" value="InterPro"/>
</dbReference>
<dbReference type="FunFam" id="3.40.50.1370:FF:000001">
    <property type="entry name" value="Aspartate carbamoyltransferase"/>
    <property type="match status" value="1"/>
</dbReference>
<dbReference type="FunFam" id="3.40.50.1370:FF:000002">
    <property type="entry name" value="Aspartate carbamoyltransferase 2"/>
    <property type="match status" value="1"/>
</dbReference>
<dbReference type="Gene3D" id="3.40.50.1370">
    <property type="entry name" value="Aspartate/ornithine carbamoyltransferase"/>
    <property type="match status" value="2"/>
</dbReference>
<dbReference type="HAMAP" id="MF_00001">
    <property type="entry name" value="Asp_carb_tr"/>
    <property type="match status" value="1"/>
</dbReference>
<dbReference type="InterPro" id="IPR006132">
    <property type="entry name" value="Asp/Orn_carbamoyltranf_P-bd"/>
</dbReference>
<dbReference type="InterPro" id="IPR006130">
    <property type="entry name" value="Asp/Orn_carbamoylTrfase"/>
</dbReference>
<dbReference type="InterPro" id="IPR036901">
    <property type="entry name" value="Asp/Orn_carbamoylTrfase_sf"/>
</dbReference>
<dbReference type="InterPro" id="IPR002082">
    <property type="entry name" value="Asp_carbamoyltransf"/>
</dbReference>
<dbReference type="InterPro" id="IPR006131">
    <property type="entry name" value="Asp_carbamoyltransf_Asp/Orn-bd"/>
</dbReference>
<dbReference type="NCBIfam" id="TIGR00670">
    <property type="entry name" value="asp_carb_tr"/>
    <property type="match status" value="1"/>
</dbReference>
<dbReference type="NCBIfam" id="NF002032">
    <property type="entry name" value="PRK00856.1"/>
    <property type="match status" value="1"/>
</dbReference>
<dbReference type="PANTHER" id="PTHR45753:SF6">
    <property type="entry name" value="ASPARTATE CARBAMOYLTRANSFERASE"/>
    <property type="match status" value="1"/>
</dbReference>
<dbReference type="PANTHER" id="PTHR45753">
    <property type="entry name" value="ORNITHINE CARBAMOYLTRANSFERASE, MITOCHONDRIAL"/>
    <property type="match status" value="1"/>
</dbReference>
<dbReference type="Pfam" id="PF00185">
    <property type="entry name" value="OTCace"/>
    <property type="match status" value="1"/>
</dbReference>
<dbReference type="Pfam" id="PF02729">
    <property type="entry name" value="OTCace_N"/>
    <property type="match status" value="1"/>
</dbReference>
<dbReference type="PRINTS" id="PR00100">
    <property type="entry name" value="AOTCASE"/>
</dbReference>
<dbReference type="PRINTS" id="PR00101">
    <property type="entry name" value="ATCASE"/>
</dbReference>
<dbReference type="SUPFAM" id="SSF53671">
    <property type="entry name" value="Aspartate/ornithine carbamoyltransferase"/>
    <property type="match status" value="1"/>
</dbReference>
<dbReference type="PROSITE" id="PS00097">
    <property type="entry name" value="CARBAMOYLTRANSFERASE"/>
    <property type="match status" value="1"/>
</dbReference>
<accession>O30130</accession>
<organism>
    <name type="scientific">Archaeoglobus fulgidus (strain ATCC 49558 / DSM 4304 / JCM 9628 / NBRC 100126 / VC-16)</name>
    <dbReference type="NCBI Taxonomy" id="224325"/>
    <lineage>
        <taxon>Archaea</taxon>
        <taxon>Methanobacteriati</taxon>
        <taxon>Methanobacteriota</taxon>
        <taxon>Archaeoglobi</taxon>
        <taxon>Archaeoglobales</taxon>
        <taxon>Archaeoglobaceae</taxon>
        <taxon>Archaeoglobus</taxon>
    </lineage>
</organism>
<reference key="1">
    <citation type="journal article" date="1997" name="Nature">
        <title>The complete genome sequence of the hyperthermophilic, sulphate-reducing archaeon Archaeoglobus fulgidus.</title>
        <authorList>
            <person name="Klenk H.-P."/>
            <person name="Clayton R.A."/>
            <person name="Tomb J.-F."/>
            <person name="White O."/>
            <person name="Nelson K.E."/>
            <person name="Ketchum K.A."/>
            <person name="Dodson R.J."/>
            <person name="Gwinn M.L."/>
            <person name="Hickey E.K."/>
            <person name="Peterson J.D."/>
            <person name="Richardson D.L."/>
            <person name="Kerlavage A.R."/>
            <person name="Graham D.E."/>
            <person name="Kyrpides N.C."/>
            <person name="Fleischmann R.D."/>
            <person name="Quackenbush J."/>
            <person name="Lee N.H."/>
            <person name="Sutton G.G."/>
            <person name="Gill S.R."/>
            <person name="Kirkness E.F."/>
            <person name="Dougherty B.A."/>
            <person name="McKenney K."/>
            <person name="Adams M.D."/>
            <person name="Loftus B.J."/>
            <person name="Peterson S.N."/>
            <person name="Reich C.I."/>
            <person name="McNeil L.K."/>
            <person name="Badger J.H."/>
            <person name="Glodek A."/>
            <person name="Zhou L."/>
            <person name="Overbeek R."/>
            <person name="Gocayne J.D."/>
            <person name="Weidman J.F."/>
            <person name="McDonald L.A."/>
            <person name="Utterback T.R."/>
            <person name="Cotton M.D."/>
            <person name="Spriggs T."/>
            <person name="Artiach P."/>
            <person name="Kaine B.P."/>
            <person name="Sykes S.M."/>
            <person name="Sadow P.W."/>
            <person name="D'Andrea K.P."/>
            <person name="Bowman C."/>
            <person name="Fujii C."/>
            <person name="Garland S.A."/>
            <person name="Mason T.M."/>
            <person name="Olsen G.J."/>
            <person name="Fraser C.M."/>
            <person name="Smith H.O."/>
            <person name="Woese C.R."/>
            <person name="Venter J.C."/>
        </authorList>
    </citation>
    <scope>NUCLEOTIDE SEQUENCE [LARGE SCALE GENOMIC DNA]</scope>
    <source>
        <strain>ATCC 49558 / DSM 4304 / JCM 9628 / NBRC 100126 / VC-16</strain>
    </source>
</reference>
<proteinExistence type="inferred from homology"/>
<comment type="function">
    <text evidence="1">Catalyzes the condensation of carbamoyl phosphate and aspartate to form carbamoyl aspartate and inorganic phosphate, the committed step in the de novo pyrimidine nucleotide biosynthesis pathway.</text>
</comment>
<comment type="catalytic activity">
    <reaction evidence="1">
        <text>carbamoyl phosphate + L-aspartate = N-carbamoyl-L-aspartate + phosphate + H(+)</text>
        <dbReference type="Rhea" id="RHEA:20013"/>
        <dbReference type="ChEBI" id="CHEBI:15378"/>
        <dbReference type="ChEBI" id="CHEBI:29991"/>
        <dbReference type="ChEBI" id="CHEBI:32814"/>
        <dbReference type="ChEBI" id="CHEBI:43474"/>
        <dbReference type="ChEBI" id="CHEBI:58228"/>
        <dbReference type="EC" id="2.1.3.2"/>
    </reaction>
</comment>
<comment type="pathway">
    <text evidence="1">Pyrimidine metabolism; UMP biosynthesis via de novo pathway; (S)-dihydroorotate from bicarbonate: step 2/3.</text>
</comment>
<comment type="subunit">
    <text evidence="1">Heterooligomer of catalytic and regulatory chains.</text>
</comment>
<comment type="similarity">
    <text evidence="1 2">Belongs to the aspartate/ornithine carbamoyltransferase superfamily. ATCase family.</text>
</comment>